<feature type="chain" id="PRO_0000397677" description="Capsid protein">
    <location>
        <begin position="1"/>
        <end position="262"/>
    </location>
</feature>
<feature type="region of interest" description="Disordered" evidence="4">
    <location>
        <begin position="183"/>
        <end position="262"/>
    </location>
</feature>
<feature type="short sequence motif" description="Bipartite nuclear localization signal" evidence="3">
    <location>
        <begin position="215"/>
        <end position="233"/>
    </location>
</feature>
<feature type="compositionally biased region" description="Basic residues" evidence="4">
    <location>
        <begin position="215"/>
        <end position="234"/>
    </location>
</feature>
<feature type="compositionally biased region" description="Basic residues" evidence="4">
    <location>
        <begin position="252"/>
        <end position="262"/>
    </location>
</feature>
<protein>
    <recommendedName>
        <fullName>Capsid protein</fullName>
    </recommendedName>
    <alternativeName>
        <fullName>Core antigen</fullName>
    </alternativeName>
    <alternativeName>
        <fullName>Core protein</fullName>
    </alternativeName>
    <alternativeName>
        <fullName>HBcAg</fullName>
    </alternativeName>
</protein>
<reference key="1">
    <citation type="submission" date="1991-06" db="EMBL/GenBank/DDBJ databases">
        <title>Complete nucleotide sequence of a chinese Hepatitis B virus.</title>
        <authorList>
            <person name="Tong S."/>
            <person name="Mattes F."/>
            <person name="Blum H.E."/>
            <person name="Fernholz D."/>
            <person name="Schneider R."/>
            <person name="Will H."/>
        </authorList>
    </citation>
    <scope>NUCLEOTIDE SEQUENCE [GENOMIC DNA]</scope>
</reference>
<gene>
    <name type="primary">C</name>
</gene>
<keyword id="KW-0024">Alternative initiation</keyword>
<keyword id="KW-0167">Capsid protein</keyword>
<keyword id="KW-1176">Cytoplasmic inwards viral transport</keyword>
<keyword id="KW-0238">DNA-binding</keyword>
<keyword id="KW-1035">Host cytoplasm</keyword>
<keyword id="KW-0945">Host-virus interaction</keyword>
<keyword id="KW-1177">Microtubular inwards viral transport</keyword>
<keyword id="KW-0597">Phosphoprotein</keyword>
<keyword id="KW-1185">Reference proteome</keyword>
<keyword id="KW-0694">RNA-binding</keyword>
<keyword id="KW-1144">T=4 icosahedral capsid protein</keyword>
<keyword id="KW-1163">Viral penetration into host nucleus</keyword>
<keyword id="KW-0946">Virion</keyword>
<keyword id="KW-1160">Virus entry into host cell</keyword>
<comment type="function">
    <text evidence="1">Self assembles to form an icosahedral capsid. Most capsid appear to be large particles with an icosahedral symmetry of T=4 and consist of 240 copies of capsid protein, though a fraction forms smaller T=3 particles consisting of 180 capsid proteins. Entering capsid are transported along microtubules to the nucleus. Phosphorylation of the capsid is thought to induce exposure of nuclear localization signal in the C-terminal portion of the capsid protein that allows binding to the nuclear pore complex via the importin (karyopherin-) alpha and beta. Capsids are imported in intact form through the nuclear pore into the nuclear basket, where it probably binds NUP153. Only capsids that contain the mature viral genome can release the viral DNA and capsid protein into the nucleoplasm. Immature capsids get stucked in the basket. Capsids encapsulate the pre-genomic RNA and the P protein. Pre-genomic RNA is reverse transcribed into DNA while the capsid is still in the cytoplasm. The capsid can then either be directed to the nucleus, providing more genome for transcription, or bud through the endoplasmic reticulum to provide new virions (By similarity).</text>
</comment>
<comment type="subunit">
    <text evidence="1">Homodimerizes, then multimerizes.</text>
</comment>
<comment type="subcellular location">
    <molecule>Capsid protein</molecule>
    <subcellularLocation>
        <location evidence="2">Virion</location>
    </subcellularLocation>
    <subcellularLocation>
        <location evidence="2">Host cytoplasm</location>
    </subcellularLocation>
</comment>
<comment type="alternative products">
    <event type="alternative initiation"/>
    <isoform>
        <id>Q66406-1</id>
        <name>Capsid protein</name>
        <sequence type="displayed"/>
    </isoform>
    <isoform>
        <id>Q89860-1</id>
        <name>External core antigen</name>
        <sequence type="external"/>
    </isoform>
</comment>
<comment type="similarity">
    <text evidence="5">Belongs to the avihepadnavirus core antigen family.</text>
</comment>
<accession>Q66406</accession>
<organism>
    <name type="scientific">Duck hepatitis B virus (isolate Shanghai/DHBVQCA34)</name>
    <name type="common">DHBV</name>
    <dbReference type="NCBI Taxonomy" id="644639"/>
    <lineage>
        <taxon>Viruses</taxon>
        <taxon>Riboviria</taxon>
        <taxon>Pararnavirae</taxon>
        <taxon>Artverviricota</taxon>
        <taxon>Revtraviricetes</taxon>
        <taxon>Blubervirales</taxon>
        <taxon>Hepadnaviridae</taxon>
        <taxon>Avihepadnavirus</taxon>
        <taxon>Duck hepatitis B virus</taxon>
    </lineage>
</organism>
<evidence type="ECO:0000250" key="1"/>
<evidence type="ECO:0000250" key="2">
    <source>
        <dbReference type="UniProtKB" id="P03148"/>
    </source>
</evidence>
<evidence type="ECO:0000255" key="3"/>
<evidence type="ECO:0000256" key="4">
    <source>
        <dbReference type="SAM" id="MobiDB-lite"/>
    </source>
</evidence>
<evidence type="ECO:0000305" key="5"/>
<name>CAPSD_DHBVQ</name>
<sequence length="262" mass="30174">MDINASRALANVYDLPDDFFPKIDDLVRDAKDALEPYWKSDSIKKHVLIATHFVDLIEDFWQTTQGMHEIAESLRAVIPPTTAPVPTGYLIQHEEAEEIPLGDLFKHQEERIVSFQPDYPITARIHAHLKAYAKINEESLDRARRLLWWHYNCLLWGEANVTNYISRLRTWLSTPEKYRGRDAPTIEAITRPIQAAQGGRKTSSGTRKPRGLEPRRRKVKTTVVYGRRRSKSRERRAPSPQRAGSPLPRSSSSHHRSPSPRK</sequence>
<dbReference type="EMBL" id="X60213">
    <property type="protein sequence ID" value="CAA42774.1"/>
    <property type="molecule type" value="Genomic_DNA"/>
</dbReference>
<dbReference type="PIR" id="S12843">
    <property type="entry name" value="S12843"/>
</dbReference>
<dbReference type="RefSeq" id="NP_039829.1">
    <property type="nucleotide sequence ID" value="NC_001344.1"/>
</dbReference>
<dbReference type="SMR" id="Q66406"/>
<dbReference type="KEGG" id="vg:2546413"/>
<dbReference type="Proteomes" id="UP000009098">
    <property type="component" value="Segment"/>
</dbReference>
<dbReference type="GO" id="GO:0043657">
    <property type="term" value="C:host cell"/>
    <property type="evidence" value="ECO:0007669"/>
    <property type="project" value="GOC"/>
</dbReference>
<dbReference type="GO" id="GO:0030430">
    <property type="term" value="C:host cell cytoplasm"/>
    <property type="evidence" value="ECO:0007669"/>
    <property type="project" value="UniProtKB-SubCell"/>
</dbReference>
<dbReference type="GO" id="GO:0039619">
    <property type="term" value="C:T=4 icosahedral viral capsid"/>
    <property type="evidence" value="ECO:0007669"/>
    <property type="project" value="UniProtKB-KW"/>
</dbReference>
<dbReference type="GO" id="GO:0003677">
    <property type="term" value="F:DNA binding"/>
    <property type="evidence" value="ECO:0007669"/>
    <property type="project" value="UniProtKB-KW"/>
</dbReference>
<dbReference type="GO" id="GO:0003723">
    <property type="term" value="F:RNA binding"/>
    <property type="evidence" value="ECO:0007669"/>
    <property type="project" value="UniProtKB-KW"/>
</dbReference>
<dbReference type="GO" id="GO:0005198">
    <property type="term" value="F:structural molecule activity"/>
    <property type="evidence" value="ECO:0007669"/>
    <property type="project" value="InterPro"/>
</dbReference>
<dbReference type="GO" id="GO:0075521">
    <property type="term" value="P:microtubule-dependent intracellular transport of viral material towards nucleus"/>
    <property type="evidence" value="ECO:0007669"/>
    <property type="project" value="UniProtKB-KW"/>
</dbReference>
<dbReference type="GO" id="GO:0046718">
    <property type="term" value="P:symbiont entry into host cell"/>
    <property type="evidence" value="ECO:0007669"/>
    <property type="project" value="UniProtKB-KW"/>
</dbReference>
<dbReference type="GO" id="GO:0075732">
    <property type="term" value="P:viral penetration into host nucleus"/>
    <property type="evidence" value="ECO:0007669"/>
    <property type="project" value="UniProtKB-KW"/>
</dbReference>
<dbReference type="Gene3D" id="1.10.4090.10">
    <property type="entry name" value="Viral capsid, core domain supefamily, Hepatitis B virus"/>
    <property type="match status" value="2"/>
</dbReference>
<dbReference type="InterPro" id="IPR002006">
    <property type="entry name" value="Hepatitis_core"/>
</dbReference>
<dbReference type="InterPro" id="IPR036459">
    <property type="entry name" value="Viral_capsid_core_dom_sf_HBV"/>
</dbReference>
<dbReference type="Pfam" id="PF00906">
    <property type="entry name" value="Hepatitis_core"/>
    <property type="match status" value="1"/>
</dbReference>
<dbReference type="SUPFAM" id="SSF47852">
    <property type="entry name" value="Hepatitis B viral capsid (hbcag)"/>
    <property type="match status" value="1"/>
</dbReference>
<organismHost>
    <name type="scientific">Anas</name>
    <name type="common">ducks</name>
    <dbReference type="NCBI Taxonomy" id="8835"/>
</organismHost>
<proteinExistence type="inferred from homology"/>